<protein>
    <recommendedName>
        <fullName evidence="1">Adenosylcobinamide-GDP ribazoletransferase</fullName>
        <ecNumber evidence="1">2.7.8.26</ecNumber>
    </recommendedName>
    <alternativeName>
        <fullName evidence="1">Cobalamin synthase</fullName>
    </alternativeName>
    <alternativeName>
        <fullName evidence="1">Cobalamin-5'-phosphate synthase</fullName>
    </alternativeName>
</protein>
<keyword id="KW-1003">Cell membrane</keyword>
<keyword id="KW-0169">Cobalamin biosynthesis</keyword>
<keyword id="KW-0460">Magnesium</keyword>
<keyword id="KW-0472">Membrane</keyword>
<keyword id="KW-0808">Transferase</keyword>
<keyword id="KW-0812">Transmembrane</keyword>
<keyword id="KW-1133">Transmembrane helix</keyword>
<feature type="chain" id="PRO_1000132567" description="Adenosylcobinamide-GDP ribazoletransferase">
    <location>
        <begin position="1"/>
        <end position="248"/>
    </location>
</feature>
<feature type="transmembrane region" description="Helical" evidence="1">
    <location>
        <begin position="36"/>
        <end position="56"/>
    </location>
</feature>
<feature type="transmembrane region" description="Helical" evidence="1">
    <location>
        <begin position="59"/>
        <end position="79"/>
    </location>
</feature>
<feature type="transmembrane region" description="Helical" evidence="1">
    <location>
        <begin position="114"/>
        <end position="134"/>
    </location>
</feature>
<feature type="transmembrane region" description="Helical" evidence="1">
    <location>
        <begin position="137"/>
        <end position="157"/>
    </location>
</feature>
<feature type="transmembrane region" description="Helical" evidence="1">
    <location>
        <begin position="170"/>
        <end position="190"/>
    </location>
</feature>
<feature type="transmembrane region" description="Helical" evidence="1">
    <location>
        <begin position="199"/>
        <end position="219"/>
    </location>
</feature>
<sequence length="248" mass="27669">MKSILNDFLLMIQFFTRIPVNKNLQCEKENFKRGAFFLPVVAFIIGGMEFLIYLGLKNFLPANVIIVLLILFTAMITGGLHMDGLADTCDGFFSLRDKERIIEIMKDSRIGSYGTIALIIDLLLKYQLLYSLVLKGYSIAIVLAPIIGRISILFLCLSKRTAKKNGSGNIFIGNMSKPIIFFITTIVLVLSTYFLGLRATIIPFIGVLLITYLLYLLCLNKINGLTGDTLGACNELGEITFLLILLMM</sequence>
<gene>
    <name evidence="1" type="primary">cobS</name>
    <name type="ordered locus">CLI_0902</name>
</gene>
<dbReference type="EC" id="2.7.8.26" evidence="1"/>
<dbReference type="EMBL" id="CP000728">
    <property type="protein sequence ID" value="ABS41274.1"/>
    <property type="molecule type" value="Genomic_DNA"/>
</dbReference>
<dbReference type="RefSeq" id="WP_011987753.1">
    <property type="nucleotide sequence ID" value="NC_009699.1"/>
</dbReference>
<dbReference type="KEGG" id="cbf:CLI_0902"/>
<dbReference type="HOGENOM" id="CLU_057426_1_2_9"/>
<dbReference type="UniPathway" id="UPA00148">
    <property type="reaction ID" value="UER00238"/>
</dbReference>
<dbReference type="Proteomes" id="UP000002410">
    <property type="component" value="Chromosome"/>
</dbReference>
<dbReference type="GO" id="GO:0005886">
    <property type="term" value="C:plasma membrane"/>
    <property type="evidence" value="ECO:0007669"/>
    <property type="project" value="UniProtKB-SubCell"/>
</dbReference>
<dbReference type="GO" id="GO:0051073">
    <property type="term" value="F:adenosylcobinamide-GDP ribazoletransferase activity"/>
    <property type="evidence" value="ECO:0007669"/>
    <property type="project" value="UniProtKB-UniRule"/>
</dbReference>
<dbReference type="GO" id="GO:0008818">
    <property type="term" value="F:cobalamin 5'-phosphate synthase activity"/>
    <property type="evidence" value="ECO:0007669"/>
    <property type="project" value="UniProtKB-UniRule"/>
</dbReference>
<dbReference type="GO" id="GO:0009236">
    <property type="term" value="P:cobalamin biosynthetic process"/>
    <property type="evidence" value="ECO:0007669"/>
    <property type="project" value="UniProtKB-UniRule"/>
</dbReference>
<dbReference type="HAMAP" id="MF_00719">
    <property type="entry name" value="CobS"/>
    <property type="match status" value="1"/>
</dbReference>
<dbReference type="InterPro" id="IPR003805">
    <property type="entry name" value="CobS"/>
</dbReference>
<dbReference type="NCBIfam" id="TIGR00317">
    <property type="entry name" value="cobS"/>
    <property type="match status" value="1"/>
</dbReference>
<dbReference type="PANTHER" id="PTHR34148">
    <property type="entry name" value="ADENOSYLCOBINAMIDE-GDP RIBAZOLETRANSFERASE"/>
    <property type="match status" value="1"/>
</dbReference>
<dbReference type="PANTHER" id="PTHR34148:SF1">
    <property type="entry name" value="ADENOSYLCOBINAMIDE-GDP RIBAZOLETRANSFERASE"/>
    <property type="match status" value="1"/>
</dbReference>
<dbReference type="Pfam" id="PF02654">
    <property type="entry name" value="CobS"/>
    <property type="match status" value="1"/>
</dbReference>
<comment type="function">
    <text evidence="1">Joins adenosylcobinamide-GDP and alpha-ribazole to generate adenosylcobalamin (Ado-cobalamin). Also synthesizes adenosylcobalamin 5'-phosphate from adenosylcobinamide-GDP and alpha-ribazole 5'-phosphate.</text>
</comment>
<comment type="catalytic activity">
    <reaction evidence="1">
        <text>alpha-ribazole + adenosylcob(III)inamide-GDP = adenosylcob(III)alamin + GMP + H(+)</text>
        <dbReference type="Rhea" id="RHEA:16049"/>
        <dbReference type="ChEBI" id="CHEBI:10329"/>
        <dbReference type="ChEBI" id="CHEBI:15378"/>
        <dbReference type="ChEBI" id="CHEBI:18408"/>
        <dbReference type="ChEBI" id="CHEBI:58115"/>
        <dbReference type="ChEBI" id="CHEBI:60487"/>
        <dbReference type="EC" id="2.7.8.26"/>
    </reaction>
</comment>
<comment type="catalytic activity">
    <reaction evidence="1">
        <text>alpha-ribazole 5'-phosphate + adenosylcob(III)inamide-GDP = adenosylcob(III)alamin 5'-phosphate + GMP + H(+)</text>
        <dbReference type="Rhea" id="RHEA:23560"/>
        <dbReference type="ChEBI" id="CHEBI:15378"/>
        <dbReference type="ChEBI" id="CHEBI:57918"/>
        <dbReference type="ChEBI" id="CHEBI:58115"/>
        <dbReference type="ChEBI" id="CHEBI:60487"/>
        <dbReference type="ChEBI" id="CHEBI:60493"/>
        <dbReference type="EC" id="2.7.8.26"/>
    </reaction>
</comment>
<comment type="cofactor">
    <cofactor evidence="1">
        <name>Mg(2+)</name>
        <dbReference type="ChEBI" id="CHEBI:18420"/>
    </cofactor>
</comment>
<comment type="pathway">
    <text evidence="1">Cofactor biosynthesis; adenosylcobalamin biosynthesis; adenosylcobalamin from cob(II)yrinate a,c-diamide: step 7/7.</text>
</comment>
<comment type="subcellular location">
    <subcellularLocation>
        <location evidence="1">Cell membrane</location>
        <topology evidence="1">Multi-pass membrane protein</topology>
    </subcellularLocation>
</comment>
<comment type="similarity">
    <text evidence="1">Belongs to the CobS family.</text>
</comment>
<reference key="1">
    <citation type="submission" date="2007-06" db="EMBL/GenBank/DDBJ databases">
        <authorList>
            <person name="Brinkac L.M."/>
            <person name="Daugherty S."/>
            <person name="Dodson R.J."/>
            <person name="Madupu R."/>
            <person name="Brown J.L."/>
            <person name="Bruce D."/>
            <person name="Detter C."/>
            <person name="Munk C."/>
            <person name="Smith L.A."/>
            <person name="Smith T.J."/>
            <person name="White O."/>
            <person name="Brettin T.S."/>
        </authorList>
    </citation>
    <scope>NUCLEOTIDE SEQUENCE [LARGE SCALE GENOMIC DNA]</scope>
    <source>
        <strain>Langeland / NCTC 10281 / Type F</strain>
    </source>
</reference>
<evidence type="ECO:0000255" key="1">
    <source>
        <dbReference type="HAMAP-Rule" id="MF_00719"/>
    </source>
</evidence>
<organism>
    <name type="scientific">Clostridium botulinum (strain Langeland / NCTC 10281 / Type F)</name>
    <dbReference type="NCBI Taxonomy" id="441772"/>
    <lineage>
        <taxon>Bacteria</taxon>
        <taxon>Bacillati</taxon>
        <taxon>Bacillota</taxon>
        <taxon>Clostridia</taxon>
        <taxon>Eubacteriales</taxon>
        <taxon>Clostridiaceae</taxon>
        <taxon>Clostridium</taxon>
    </lineage>
</organism>
<name>COBS_CLOBL</name>
<proteinExistence type="inferred from homology"/>
<accession>A7GBL1</accession>